<name>CK5P1_MOUSE</name>
<organism>
    <name type="scientific">Mus musculus</name>
    <name type="common">Mouse</name>
    <dbReference type="NCBI Taxonomy" id="10090"/>
    <lineage>
        <taxon>Eukaryota</taxon>
        <taxon>Metazoa</taxon>
        <taxon>Chordata</taxon>
        <taxon>Craniata</taxon>
        <taxon>Vertebrata</taxon>
        <taxon>Euteleostomi</taxon>
        <taxon>Mammalia</taxon>
        <taxon>Eutheria</taxon>
        <taxon>Euarchontoglires</taxon>
        <taxon>Glires</taxon>
        <taxon>Rodentia</taxon>
        <taxon>Myomorpha</taxon>
        <taxon>Muroidea</taxon>
        <taxon>Muridae</taxon>
        <taxon>Murinae</taxon>
        <taxon>Mus</taxon>
        <taxon>Mus</taxon>
    </lineage>
</organism>
<evidence type="ECO:0000250" key="1">
    <source>
        <dbReference type="UniProtKB" id="Q96SZ6"/>
    </source>
</evidence>
<evidence type="ECO:0000250" key="2">
    <source>
        <dbReference type="UniProtKB" id="Q9X2H6"/>
    </source>
</evidence>
<evidence type="ECO:0000255" key="3"/>
<evidence type="ECO:0000255" key="4">
    <source>
        <dbReference type="PROSITE-ProRule" id="PRU00208"/>
    </source>
</evidence>
<evidence type="ECO:0000255" key="5">
    <source>
        <dbReference type="PROSITE-ProRule" id="PRU00780"/>
    </source>
</evidence>
<evidence type="ECO:0000255" key="6">
    <source>
        <dbReference type="PROSITE-ProRule" id="PRU01266"/>
    </source>
</evidence>
<evidence type="ECO:0000256" key="7">
    <source>
        <dbReference type="SAM" id="MobiDB-lite"/>
    </source>
</evidence>
<evidence type="ECO:0000269" key="8">
    <source>
    </source>
</evidence>
<evidence type="ECO:0000303" key="9">
    <source>
    </source>
</evidence>
<evidence type="ECO:0000305" key="10"/>
<evidence type="ECO:0000305" key="11">
    <source>
    </source>
</evidence>
<evidence type="ECO:0000312" key="12">
    <source>
        <dbReference type="MGI" id="MGI:1914221"/>
    </source>
</evidence>
<comment type="function">
    <text evidence="1 8">Methylthiotransferase that catalyzes the conversion of N6-(dimethylallyl)adenosine (i(6)A) to 2-methylthio-N6-(dimethylallyl)adenosine (ms(2)i(6)A) at position 37 (adjacent to the 3'-end of the anticodon) of four mitochondrial DNA-encoded tRNAs (Ser(UCN), Phe, Tyr and Trp) (PubMed:25738458). Essential for efficient and highly accurate protein translation by the ribosome (PubMed:25738458). Specifically inhibits CDK5 activation by CDK5R1 (By similarity). Essential for efficient mitochondrial protein synthesis and respiratory chain (PubMed:25738458).</text>
</comment>
<comment type="catalytic activity">
    <reaction evidence="11">
        <text>N(6)-dimethylallyladenosine(37) in tRNA + (sulfur carrier)-SH + AH2 + 2 S-adenosyl-L-methionine = 2-methylsulfanyl-N(6)-dimethylallyladenosine(37) in tRNA + (sulfur carrier)-H + 5'-deoxyadenosine + L-methionine + A + S-adenosyl-L-homocysteine + 2 H(+)</text>
        <dbReference type="Rhea" id="RHEA:37067"/>
        <dbReference type="Rhea" id="RHEA-COMP:10375"/>
        <dbReference type="Rhea" id="RHEA-COMP:10376"/>
        <dbReference type="Rhea" id="RHEA-COMP:14737"/>
        <dbReference type="Rhea" id="RHEA-COMP:14739"/>
        <dbReference type="ChEBI" id="CHEBI:13193"/>
        <dbReference type="ChEBI" id="CHEBI:15378"/>
        <dbReference type="ChEBI" id="CHEBI:17319"/>
        <dbReference type="ChEBI" id="CHEBI:17499"/>
        <dbReference type="ChEBI" id="CHEBI:29917"/>
        <dbReference type="ChEBI" id="CHEBI:57844"/>
        <dbReference type="ChEBI" id="CHEBI:57856"/>
        <dbReference type="ChEBI" id="CHEBI:59789"/>
        <dbReference type="ChEBI" id="CHEBI:64428"/>
        <dbReference type="ChEBI" id="CHEBI:74415"/>
        <dbReference type="ChEBI" id="CHEBI:74417"/>
        <dbReference type="EC" id="2.8.4.3"/>
    </reaction>
    <physiologicalReaction direction="left-to-right" evidence="8">
        <dbReference type="Rhea" id="RHEA:37068"/>
    </physiologicalReaction>
</comment>
<comment type="cofactor">
    <cofactor evidence="5">
        <name>[4Fe-4S] cluster</name>
        <dbReference type="ChEBI" id="CHEBI:49883"/>
    </cofactor>
    <text evidence="5">Binds 2 [4Fe-4S] clusters. One cluster is coordinated with 3 cysteines and an exchangeable S-adenosyl-L-methionine.</text>
</comment>
<comment type="subunit">
    <text evidence="1">Interacts with CDK5R1 (p35 form). CDK5RAP1, CDK5RAP2 and CDK5RAP3 show competitive binding to CDK5R1. Probably forms a complex with CDK5R1 and CDK5.</text>
</comment>
<comment type="subcellular location">
    <subcellularLocation>
        <location evidence="8">Mitochondrion</location>
    </subcellularLocation>
</comment>
<comment type="tissue specificity">
    <text evidence="8">Expressed in brain, liver, skeletal muscle and heart.</text>
</comment>
<comment type="disruption phenotype">
    <text evidence="8">Knockout mice show a deficiency in ms(2)i(6)A modification, resulting in impaired mitochondrial protein synthesis, which leads to respiratory defects.</text>
</comment>
<comment type="similarity">
    <text evidence="10">Belongs to the methylthiotransferase family. MiaB subfamily.</text>
</comment>
<proteinExistence type="evidence at protein level"/>
<dbReference type="EC" id="2.8.4.3" evidence="8"/>
<dbReference type="EMBL" id="AK010097">
    <property type="protein sequence ID" value="BAB26700.1"/>
    <property type="molecule type" value="mRNA"/>
</dbReference>
<dbReference type="EMBL" id="AK088517">
    <property type="protein sequence ID" value="BAC40398.1"/>
    <property type="molecule type" value="mRNA"/>
</dbReference>
<dbReference type="EMBL" id="BC025132">
    <property type="protein sequence ID" value="AAH25132.1"/>
    <property type="molecule type" value="mRNA"/>
</dbReference>
<dbReference type="CCDS" id="CCDS16931.1"/>
<dbReference type="RefSeq" id="NP_080152.1">
    <property type="nucleotide sequence ID" value="NM_025876.2"/>
</dbReference>
<dbReference type="SMR" id="Q8BTW8"/>
<dbReference type="FunCoup" id="Q8BTW8">
    <property type="interactions" value="3399"/>
</dbReference>
<dbReference type="IntAct" id="Q8BTW8">
    <property type="interactions" value="1"/>
</dbReference>
<dbReference type="MINT" id="Q8BTW8"/>
<dbReference type="STRING" id="10090.ENSMUSP00000105353"/>
<dbReference type="PhosphoSitePlus" id="Q8BTW8"/>
<dbReference type="SwissPalm" id="Q8BTW8"/>
<dbReference type="PaxDb" id="10090-ENSMUSP00000105353"/>
<dbReference type="PeptideAtlas" id="Q8BTW8"/>
<dbReference type="ProteomicsDB" id="279088"/>
<dbReference type="Pumba" id="Q8BTW8"/>
<dbReference type="Antibodypedia" id="43007">
    <property type="antibodies" value="180 antibodies from 27 providers"/>
</dbReference>
<dbReference type="Ensembl" id="ENSMUST00000028990.10">
    <property type="protein sequence ID" value="ENSMUSP00000028990.4"/>
    <property type="gene ID" value="ENSMUSG00000027487.12"/>
</dbReference>
<dbReference type="Ensembl" id="ENSMUST00000109731.8">
    <property type="protein sequence ID" value="ENSMUSP00000105353.2"/>
    <property type="gene ID" value="ENSMUSG00000027487.12"/>
</dbReference>
<dbReference type="GeneID" id="66971"/>
<dbReference type="KEGG" id="mmu:66971"/>
<dbReference type="UCSC" id="uc008njb.1">
    <property type="organism name" value="mouse"/>
</dbReference>
<dbReference type="AGR" id="MGI:1914221"/>
<dbReference type="CTD" id="51654"/>
<dbReference type="MGI" id="MGI:1914221">
    <property type="gene designation" value="Cdk5rap1"/>
</dbReference>
<dbReference type="VEuPathDB" id="HostDB:ENSMUSG00000027487"/>
<dbReference type="eggNOG" id="KOG2492">
    <property type="taxonomic scope" value="Eukaryota"/>
</dbReference>
<dbReference type="GeneTree" id="ENSGT00940000160361"/>
<dbReference type="HOGENOM" id="CLU_018697_2_1_1"/>
<dbReference type="InParanoid" id="Q8BTW8"/>
<dbReference type="OMA" id="CEHFHIP"/>
<dbReference type="OrthoDB" id="190098at2759"/>
<dbReference type="PhylomeDB" id="Q8BTW8"/>
<dbReference type="TreeFam" id="TF101033"/>
<dbReference type="BioGRID-ORCS" id="66971">
    <property type="hits" value="0 hits in 78 CRISPR screens"/>
</dbReference>
<dbReference type="ChiTaRS" id="Cdk5rap1">
    <property type="organism name" value="mouse"/>
</dbReference>
<dbReference type="PRO" id="PR:Q8BTW8"/>
<dbReference type="Proteomes" id="UP000000589">
    <property type="component" value="Chromosome 2"/>
</dbReference>
<dbReference type="RNAct" id="Q8BTW8">
    <property type="molecule type" value="protein"/>
</dbReference>
<dbReference type="Bgee" id="ENSMUSG00000027487">
    <property type="expression patterns" value="Expressed in primary oocyte and 248 other cell types or tissues"/>
</dbReference>
<dbReference type="ExpressionAtlas" id="Q8BTW8">
    <property type="expression patterns" value="baseline and differential"/>
</dbReference>
<dbReference type="GO" id="GO:0005829">
    <property type="term" value="C:cytosol"/>
    <property type="evidence" value="ECO:0007669"/>
    <property type="project" value="Ensembl"/>
</dbReference>
<dbReference type="GO" id="GO:0005759">
    <property type="term" value="C:mitochondrial matrix"/>
    <property type="evidence" value="ECO:0007669"/>
    <property type="project" value="Ensembl"/>
</dbReference>
<dbReference type="GO" id="GO:0005739">
    <property type="term" value="C:mitochondrion"/>
    <property type="evidence" value="ECO:0000314"/>
    <property type="project" value="MGI"/>
</dbReference>
<dbReference type="GO" id="GO:0005654">
    <property type="term" value="C:nucleoplasm"/>
    <property type="evidence" value="ECO:0007669"/>
    <property type="project" value="Ensembl"/>
</dbReference>
<dbReference type="GO" id="GO:0051539">
    <property type="term" value="F:4 iron, 4 sulfur cluster binding"/>
    <property type="evidence" value="ECO:0007669"/>
    <property type="project" value="UniProtKB-KW"/>
</dbReference>
<dbReference type="GO" id="GO:0046872">
    <property type="term" value="F:metal ion binding"/>
    <property type="evidence" value="ECO:0007669"/>
    <property type="project" value="UniProtKB-KW"/>
</dbReference>
<dbReference type="GO" id="GO:0035597">
    <property type="term" value="F:N6-isopentenyladenosine methylthiotransferase activity"/>
    <property type="evidence" value="ECO:0000315"/>
    <property type="project" value="MGI"/>
</dbReference>
<dbReference type="GO" id="GO:0070900">
    <property type="term" value="P:mitochondrial tRNA modification"/>
    <property type="evidence" value="ECO:0000315"/>
    <property type="project" value="MGI"/>
</dbReference>
<dbReference type="GO" id="GO:0045736">
    <property type="term" value="P:negative regulation of cyclin-dependent protein serine/threonine kinase activity"/>
    <property type="evidence" value="ECO:0000250"/>
    <property type="project" value="UniProtKB"/>
</dbReference>
<dbReference type="GO" id="GO:0070131">
    <property type="term" value="P:positive regulation of mitochondrial translation"/>
    <property type="evidence" value="ECO:0000315"/>
    <property type="project" value="MGI"/>
</dbReference>
<dbReference type="GO" id="GO:0045903">
    <property type="term" value="P:positive regulation of translational fidelity"/>
    <property type="evidence" value="ECO:0000316"/>
    <property type="project" value="MGI"/>
</dbReference>
<dbReference type="GO" id="GO:0000079">
    <property type="term" value="P:regulation of cyclin-dependent protein serine/threonine kinase activity"/>
    <property type="evidence" value="ECO:0000250"/>
    <property type="project" value="UniProtKB"/>
</dbReference>
<dbReference type="FunFam" id="3.40.50.12160:FF:000003">
    <property type="entry name" value="CDK5 regulatory subunit-associated protein 1"/>
    <property type="match status" value="1"/>
</dbReference>
<dbReference type="FunFam" id="3.80.30.20:FF:000003">
    <property type="entry name" value="CDK5 regulatory subunit-associated protein 1"/>
    <property type="match status" value="1"/>
</dbReference>
<dbReference type="Gene3D" id="3.40.50.12160">
    <property type="entry name" value="Methylthiotransferase, N-terminal domain"/>
    <property type="match status" value="1"/>
</dbReference>
<dbReference type="Gene3D" id="3.80.30.20">
    <property type="entry name" value="tm_1862 like domain"/>
    <property type="match status" value="1"/>
</dbReference>
<dbReference type="HAMAP" id="MF_01864">
    <property type="entry name" value="tRNA_metthiotr_MiaB"/>
    <property type="match status" value="1"/>
</dbReference>
<dbReference type="InterPro" id="IPR006638">
    <property type="entry name" value="Elp3/MiaA/NifB-like_rSAM"/>
</dbReference>
<dbReference type="InterPro" id="IPR005839">
    <property type="entry name" value="Methylthiotransferase"/>
</dbReference>
<dbReference type="InterPro" id="IPR020612">
    <property type="entry name" value="Methylthiotransferase_CS"/>
</dbReference>
<dbReference type="InterPro" id="IPR013848">
    <property type="entry name" value="Methylthiotransferase_N"/>
</dbReference>
<dbReference type="InterPro" id="IPR038135">
    <property type="entry name" value="Methylthiotransferase_N_sf"/>
</dbReference>
<dbReference type="InterPro" id="IPR006463">
    <property type="entry name" value="MiaB_methiolase"/>
</dbReference>
<dbReference type="InterPro" id="IPR007197">
    <property type="entry name" value="rSAM"/>
</dbReference>
<dbReference type="InterPro" id="IPR023404">
    <property type="entry name" value="rSAM_horseshoe"/>
</dbReference>
<dbReference type="InterPro" id="IPR002792">
    <property type="entry name" value="TRAM_dom"/>
</dbReference>
<dbReference type="NCBIfam" id="TIGR01574">
    <property type="entry name" value="miaB-methiolase"/>
    <property type="match status" value="1"/>
</dbReference>
<dbReference type="NCBIfam" id="TIGR00089">
    <property type="entry name" value="MiaB/RimO family radical SAM methylthiotransferase"/>
    <property type="match status" value="1"/>
</dbReference>
<dbReference type="PANTHER" id="PTHR43020">
    <property type="entry name" value="CDK5 REGULATORY SUBUNIT-ASSOCIATED PROTEIN 1"/>
    <property type="match status" value="1"/>
</dbReference>
<dbReference type="PANTHER" id="PTHR43020:SF2">
    <property type="entry name" value="MITOCHONDRIAL TRNA METHYLTHIOTRANSFERASE CDK5RAP1"/>
    <property type="match status" value="1"/>
</dbReference>
<dbReference type="Pfam" id="PF04055">
    <property type="entry name" value="Radical_SAM"/>
    <property type="match status" value="1"/>
</dbReference>
<dbReference type="Pfam" id="PF01938">
    <property type="entry name" value="TRAM"/>
    <property type="match status" value="1"/>
</dbReference>
<dbReference type="Pfam" id="PF00919">
    <property type="entry name" value="UPF0004"/>
    <property type="match status" value="1"/>
</dbReference>
<dbReference type="SFLD" id="SFLDF00273">
    <property type="entry name" value="(dimethylallyl)adenosine_tRNA"/>
    <property type="match status" value="1"/>
</dbReference>
<dbReference type="SFLD" id="SFLDG01082">
    <property type="entry name" value="B12-binding_domain_containing"/>
    <property type="match status" value="1"/>
</dbReference>
<dbReference type="SFLD" id="SFLDF00413">
    <property type="entry name" value="CDK5RAP1"/>
    <property type="match status" value="1"/>
</dbReference>
<dbReference type="SFLD" id="SFLDS00029">
    <property type="entry name" value="Radical_SAM"/>
    <property type="match status" value="1"/>
</dbReference>
<dbReference type="SMART" id="SM00729">
    <property type="entry name" value="Elp3"/>
    <property type="match status" value="1"/>
</dbReference>
<dbReference type="SUPFAM" id="SSF102114">
    <property type="entry name" value="Radical SAM enzymes"/>
    <property type="match status" value="1"/>
</dbReference>
<dbReference type="PROSITE" id="PS51449">
    <property type="entry name" value="MTTASE_N"/>
    <property type="match status" value="1"/>
</dbReference>
<dbReference type="PROSITE" id="PS01278">
    <property type="entry name" value="MTTASE_RADICAL"/>
    <property type="match status" value="1"/>
</dbReference>
<dbReference type="PROSITE" id="PS51918">
    <property type="entry name" value="RADICAL_SAM"/>
    <property type="match status" value="1"/>
</dbReference>
<dbReference type="PROSITE" id="PS50926">
    <property type="entry name" value="TRAM"/>
    <property type="match status" value="1"/>
</dbReference>
<sequence length="588" mass="66110">MHPLRCVLQVQRLSAPFTSMCWVLLRTCRAQSSVSSTPCPSPEAKSSEAQKDFSSRLATGPTFQHFLRSASVPQEKPSSPEVEDPPPYLSGDELLGRQRKVYLETYGCQMNVNDTEIAWSILQKSGYLRTSNLQEADVILLVTCSIREKAEQTIWNRLHQLKVLKTKRPRSRVPLRIGILGCMAERLKGEILNREKMVDLLAGPDAYRDLPRLLAVVESGQQAANVLLSLDETYADIMPVQTSPSATSAFVSIMRGCDNMCSYCIVPFTRGRERSRPVASILDEVRKLSEQGLKEVTLLGQNVNSFRDNSEVQFNNAGSANLSRGFTTNYKPKQGGLRFSHLLDQVSRIDPEMRIRFTSPHPKDFPDEVLQLIRERHNICKQIHLPAQSGSSRVLDAMRRGYSREAYVALVHHVRETIPGVSLSSDFITGFCGETEDDHRQTVSLLREVQYNTGFLFAYSMRQKTRAYHRLKDDVPEEVKLRRLEELITVFREEASKANKTSVGCSQLVLVEGFSKRSTTDLCGRNDANLKVIFPDAEVEDITNPGLKVRAQPGDYVLVKITSASSQTLKGHILCRTTMKDSLTYCTT</sequence>
<gene>
    <name evidence="12" type="primary">Cdk5rap1</name>
</gene>
<protein>
    <recommendedName>
        <fullName evidence="9">Mitochondrial tRNA methylthiotransferase CDK5RAP1</fullName>
        <ecNumber evidence="8">2.8.4.3</ecNumber>
    </recommendedName>
    <alternativeName>
        <fullName>CDK5 activator-binding protein C42</fullName>
    </alternativeName>
    <alternativeName>
        <fullName>CDK5 regulatory subunit-associated protein 1</fullName>
    </alternativeName>
    <alternativeName>
        <fullName>mt-tRNA-2-methylthio-N6-dimethylallyladenosine synthase</fullName>
    </alternativeName>
    <alternativeName>
        <fullName>mt-tRNA-N6-(dimethylallyl)adenosine(37) methylthiotransferase</fullName>
    </alternativeName>
</protein>
<reference key="1">
    <citation type="journal article" date="2005" name="Science">
        <title>The transcriptional landscape of the mammalian genome.</title>
        <authorList>
            <person name="Carninci P."/>
            <person name="Kasukawa T."/>
            <person name="Katayama S."/>
            <person name="Gough J."/>
            <person name="Frith M.C."/>
            <person name="Maeda N."/>
            <person name="Oyama R."/>
            <person name="Ravasi T."/>
            <person name="Lenhard B."/>
            <person name="Wells C."/>
            <person name="Kodzius R."/>
            <person name="Shimokawa K."/>
            <person name="Bajic V.B."/>
            <person name="Brenner S.E."/>
            <person name="Batalov S."/>
            <person name="Forrest A.R."/>
            <person name="Zavolan M."/>
            <person name="Davis M.J."/>
            <person name="Wilming L.G."/>
            <person name="Aidinis V."/>
            <person name="Allen J.E."/>
            <person name="Ambesi-Impiombato A."/>
            <person name="Apweiler R."/>
            <person name="Aturaliya R.N."/>
            <person name="Bailey T.L."/>
            <person name="Bansal M."/>
            <person name="Baxter L."/>
            <person name="Beisel K.W."/>
            <person name="Bersano T."/>
            <person name="Bono H."/>
            <person name="Chalk A.M."/>
            <person name="Chiu K.P."/>
            <person name="Choudhary V."/>
            <person name="Christoffels A."/>
            <person name="Clutterbuck D.R."/>
            <person name="Crowe M.L."/>
            <person name="Dalla E."/>
            <person name="Dalrymple B.P."/>
            <person name="de Bono B."/>
            <person name="Della Gatta G."/>
            <person name="di Bernardo D."/>
            <person name="Down T."/>
            <person name="Engstrom P."/>
            <person name="Fagiolini M."/>
            <person name="Faulkner G."/>
            <person name="Fletcher C.F."/>
            <person name="Fukushima T."/>
            <person name="Furuno M."/>
            <person name="Futaki S."/>
            <person name="Gariboldi M."/>
            <person name="Georgii-Hemming P."/>
            <person name="Gingeras T.R."/>
            <person name="Gojobori T."/>
            <person name="Green R.E."/>
            <person name="Gustincich S."/>
            <person name="Harbers M."/>
            <person name="Hayashi Y."/>
            <person name="Hensch T.K."/>
            <person name="Hirokawa N."/>
            <person name="Hill D."/>
            <person name="Huminiecki L."/>
            <person name="Iacono M."/>
            <person name="Ikeo K."/>
            <person name="Iwama A."/>
            <person name="Ishikawa T."/>
            <person name="Jakt M."/>
            <person name="Kanapin A."/>
            <person name="Katoh M."/>
            <person name="Kawasawa Y."/>
            <person name="Kelso J."/>
            <person name="Kitamura H."/>
            <person name="Kitano H."/>
            <person name="Kollias G."/>
            <person name="Krishnan S.P."/>
            <person name="Kruger A."/>
            <person name="Kummerfeld S.K."/>
            <person name="Kurochkin I.V."/>
            <person name="Lareau L.F."/>
            <person name="Lazarevic D."/>
            <person name="Lipovich L."/>
            <person name="Liu J."/>
            <person name="Liuni S."/>
            <person name="McWilliam S."/>
            <person name="Madan Babu M."/>
            <person name="Madera M."/>
            <person name="Marchionni L."/>
            <person name="Matsuda H."/>
            <person name="Matsuzawa S."/>
            <person name="Miki H."/>
            <person name="Mignone F."/>
            <person name="Miyake S."/>
            <person name="Morris K."/>
            <person name="Mottagui-Tabar S."/>
            <person name="Mulder N."/>
            <person name="Nakano N."/>
            <person name="Nakauchi H."/>
            <person name="Ng P."/>
            <person name="Nilsson R."/>
            <person name="Nishiguchi S."/>
            <person name="Nishikawa S."/>
            <person name="Nori F."/>
            <person name="Ohara O."/>
            <person name="Okazaki Y."/>
            <person name="Orlando V."/>
            <person name="Pang K.C."/>
            <person name="Pavan W.J."/>
            <person name="Pavesi G."/>
            <person name="Pesole G."/>
            <person name="Petrovsky N."/>
            <person name="Piazza S."/>
            <person name="Reed J."/>
            <person name="Reid J.F."/>
            <person name="Ring B.Z."/>
            <person name="Ringwald M."/>
            <person name="Rost B."/>
            <person name="Ruan Y."/>
            <person name="Salzberg S.L."/>
            <person name="Sandelin A."/>
            <person name="Schneider C."/>
            <person name="Schoenbach C."/>
            <person name="Sekiguchi K."/>
            <person name="Semple C.A."/>
            <person name="Seno S."/>
            <person name="Sessa L."/>
            <person name="Sheng Y."/>
            <person name="Shibata Y."/>
            <person name="Shimada H."/>
            <person name="Shimada K."/>
            <person name="Silva D."/>
            <person name="Sinclair B."/>
            <person name="Sperling S."/>
            <person name="Stupka E."/>
            <person name="Sugiura K."/>
            <person name="Sultana R."/>
            <person name="Takenaka Y."/>
            <person name="Taki K."/>
            <person name="Tammoja K."/>
            <person name="Tan S.L."/>
            <person name="Tang S."/>
            <person name="Taylor M.S."/>
            <person name="Tegner J."/>
            <person name="Teichmann S.A."/>
            <person name="Ueda H.R."/>
            <person name="van Nimwegen E."/>
            <person name="Verardo R."/>
            <person name="Wei C.L."/>
            <person name="Yagi K."/>
            <person name="Yamanishi H."/>
            <person name="Zabarovsky E."/>
            <person name="Zhu S."/>
            <person name="Zimmer A."/>
            <person name="Hide W."/>
            <person name="Bult C."/>
            <person name="Grimmond S.M."/>
            <person name="Teasdale R.D."/>
            <person name="Liu E.T."/>
            <person name="Brusic V."/>
            <person name="Quackenbush J."/>
            <person name="Wahlestedt C."/>
            <person name="Mattick J.S."/>
            <person name="Hume D.A."/>
            <person name="Kai C."/>
            <person name="Sasaki D."/>
            <person name="Tomaru Y."/>
            <person name="Fukuda S."/>
            <person name="Kanamori-Katayama M."/>
            <person name="Suzuki M."/>
            <person name="Aoki J."/>
            <person name="Arakawa T."/>
            <person name="Iida J."/>
            <person name="Imamura K."/>
            <person name="Itoh M."/>
            <person name="Kato T."/>
            <person name="Kawaji H."/>
            <person name="Kawagashira N."/>
            <person name="Kawashima T."/>
            <person name="Kojima M."/>
            <person name="Kondo S."/>
            <person name="Konno H."/>
            <person name="Nakano K."/>
            <person name="Ninomiya N."/>
            <person name="Nishio T."/>
            <person name="Okada M."/>
            <person name="Plessy C."/>
            <person name="Shibata K."/>
            <person name="Shiraki T."/>
            <person name="Suzuki S."/>
            <person name="Tagami M."/>
            <person name="Waki K."/>
            <person name="Watahiki A."/>
            <person name="Okamura-Oho Y."/>
            <person name="Suzuki H."/>
            <person name="Kawai J."/>
            <person name="Hayashizaki Y."/>
        </authorList>
    </citation>
    <scope>NUCLEOTIDE SEQUENCE [LARGE SCALE MRNA]</scope>
    <source>
        <strain>C57BL/6J</strain>
        <strain>NOD</strain>
        <tissue>Thymus</tissue>
        <tissue>Tongue</tissue>
    </source>
</reference>
<reference key="2">
    <citation type="journal article" date="2004" name="Genome Res.">
        <title>The status, quality, and expansion of the NIH full-length cDNA project: the Mammalian Gene Collection (MGC).</title>
        <authorList>
            <consortium name="The MGC Project Team"/>
        </authorList>
    </citation>
    <scope>NUCLEOTIDE SEQUENCE [LARGE SCALE MRNA]</scope>
    <source>
        <tissue>Mammary tumor</tissue>
    </source>
</reference>
<reference key="3">
    <citation type="journal article" date="2015" name="Cell Metab.">
        <title>Cdk5rap1-mediated 2-methylthio modification of mitochondrial tRNAs governs protein translation and contributes to myopathy in mice and humans.</title>
        <authorList>
            <person name="Wei F.Y."/>
            <person name="Zhou B."/>
            <person name="Suzuki T."/>
            <person name="Miyata K."/>
            <person name="Ujihara Y."/>
            <person name="Horiguchi H."/>
            <person name="Takahashi N."/>
            <person name="Xie P."/>
            <person name="Michiue H."/>
            <person name="Fujimura A."/>
            <person name="Kaitsuka T."/>
            <person name="Matsui H."/>
            <person name="Koga Y."/>
            <person name="Mohri S."/>
            <person name="Suzuki T."/>
            <person name="Oike Y."/>
            <person name="Tomizawa K."/>
        </authorList>
    </citation>
    <scope>FUNCTION</scope>
    <scope>DISRUPTION PHENOTYPE</scope>
    <scope>SUBCELLULAR LOCATION</scope>
    <scope>CATALYTIC ACTIVITY</scope>
    <scope>TISSUE SPECIFICITY</scope>
</reference>
<keyword id="KW-0004">4Fe-4S</keyword>
<keyword id="KW-0408">Iron</keyword>
<keyword id="KW-0411">Iron-sulfur</keyword>
<keyword id="KW-0479">Metal-binding</keyword>
<keyword id="KW-0496">Mitochondrion</keyword>
<keyword id="KW-1185">Reference proteome</keyword>
<keyword id="KW-0949">S-adenosyl-L-methionine</keyword>
<keyword id="KW-0808">Transferase</keyword>
<keyword id="KW-0809">Transit peptide</keyword>
<keyword id="KW-0819">tRNA processing</keyword>
<feature type="transit peptide" description="Mitochondrion" evidence="3">
    <location>
        <begin position="1"/>
        <end position="30"/>
    </location>
</feature>
<feature type="chain" id="PRO_0000141765" description="Mitochondrial tRNA methylthiotransferase CDK5RAP1" evidence="3">
    <location>
        <begin position="31"/>
        <end position="588"/>
    </location>
</feature>
<feature type="domain" description="MTTase N-terminal" evidence="5">
    <location>
        <begin position="99"/>
        <end position="219"/>
    </location>
</feature>
<feature type="domain" description="Radical SAM core" evidence="6">
    <location>
        <begin position="243"/>
        <end position="498"/>
    </location>
</feature>
<feature type="domain" description="TRAM" evidence="4">
    <location>
        <begin position="500"/>
        <end position="575"/>
    </location>
</feature>
<feature type="region of interest" description="Disordered" evidence="7">
    <location>
        <begin position="33"/>
        <end position="53"/>
    </location>
</feature>
<feature type="region of interest" description="Disordered" evidence="7">
    <location>
        <begin position="70"/>
        <end position="91"/>
    </location>
</feature>
<feature type="binding site" evidence="5">
    <location>
        <position position="108"/>
    </location>
    <ligand>
        <name>[4Fe-4S] cluster</name>
        <dbReference type="ChEBI" id="CHEBI:49883"/>
        <label>1</label>
    </ligand>
</feature>
<feature type="binding site" evidence="5">
    <location>
        <position position="144"/>
    </location>
    <ligand>
        <name>[4Fe-4S] cluster</name>
        <dbReference type="ChEBI" id="CHEBI:49883"/>
        <label>1</label>
    </ligand>
</feature>
<feature type="binding site" evidence="5">
    <location>
        <position position="182"/>
    </location>
    <ligand>
        <name>[4Fe-4S] cluster</name>
        <dbReference type="ChEBI" id="CHEBI:49883"/>
        <label>1</label>
    </ligand>
</feature>
<feature type="binding site" evidence="2">
    <location>
        <position position="257"/>
    </location>
    <ligand>
        <name>[4Fe-4S] cluster</name>
        <dbReference type="ChEBI" id="CHEBI:49883"/>
        <label>2</label>
        <note>4Fe-4S-S-AdoMet</note>
    </ligand>
</feature>
<feature type="binding site" evidence="2">
    <location>
        <position position="261"/>
    </location>
    <ligand>
        <name>[4Fe-4S] cluster</name>
        <dbReference type="ChEBI" id="CHEBI:49883"/>
        <label>2</label>
        <note>4Fe-4S-S-AdoMet</note>
    </ligand>
</feature>
<feature type="binding site" evidence="2">
    <location>
        <position position="264"/>
    </location>
    <ligand>
        <name>[4Fe-4S] cluster</name>
        <dbReference type="ChEBI" id="CHEBI:49883"/>
        <label>2</label>
        <note>4Fe-4S-S-AdoMet</note>
    </ligand>
</feature>
<feature type="sequence conflict" description="In Ref. 1; BAC40398." evidence="10" ref="1">
    <original>C</original>
    <variation>Y</variation>
    <location>
        <position position="505"/>
    </location>
</feature>
<accession>Q8BTW8</accession>
<accession>Q9D6Q4</accession>